<reference key="1">
    <citation type="journal article" date="1998" name="Science">
        <title>Complete genome sequence of Treponema pallidum, the syphilis spirochete.</title>
        <authorList>
            <person name="Fraser C.M."/>
            <person name="Norris S.J."/>
            <person name="Weinstock G.M."/>
            <person name="White O."/>
            <person name="Sutton G.G."/>
            <person name="Dodson R.J."/>
            <person name="Gwinn M.L."/>
            <person name="Hickey E.K."/>
            <person name="Clayton R.A."/>
            <person name="Ketchum K.A."/>
            <person name="Sodergren E."/>
            <person name="Hardham J.M."/>
            <person name="McLeod M.P."/>
            <person name="Salzberg S.L."/>
            <person name="Peterson J.D."/>
            <person name="Khalak H.G."/>
            <person name="Richardson D.L."/>
            <person name="Howell J.K."/>
            <person name="Chidambaram M."/>
            <person name="Utterback T.R."/>
            <person name="McDonald L.A."/>
            <person name="Artiach P."/>
            <person name="Bowman C."/>
            <person name="Cotton M.D."/>
            <person name="Fujii C."/>
            <person name="Garland S.A."/>
            <person name="Hatch B."/>
            <person name="Horst K."/>
            <person name="Roberts K.M."/>
            <person name="Sandusky M."/>
            <person name="Weidman J.F."/>
            <person name="Smith H.O."/>
            <person name="Venter J.C."/>
        </authorList>
    </citation>
    <scope>NUCLEOTIDE SEQUENCE [LARGE SCALE GENOMIC DNA]</scope>
    <source>
        <strain>Nichols</strain>
    </source>
</reference>
<organism>
    <name type="scientific">Treponema pallidum (strain Nichols)</name>
    <dbReference type="NCBI Taxonomy" id="243276"/>
    <lineage>
        <taxon>Bacteria</taxon>
        <taxon>Pseudomonadati</taxon>
        <taxon>Spirochaetota</taxon>
        <taxon>Spirochaetia</taxon>
        <taxon>Spirochaetales</taxon>
        <taxon>Treponemataceae</taxon>
        <taxon>Treponema</taxon>
    </lineage>
</organism>
<gene>
    <name evidence="1" type="primary">ybeY</name>
    <name type="ordered locus">TP_0650</name>
</gene>
<sequence>MSEVNKVSVSCEGFCPPPWIGQVAPFVCAVLDSQAISHWDLSIVCCTDAFIRRLNYDYRGIDSPTDVLSFENDGEYCDDAGTRFFLAGDIIISLESVRENSERFHVAAHEEFKRVLIHGILHLSGMDHQDNSPGQEMLRLQERILAQHCRVLSSGIPWES</sequence>
<evidence type="ECO:0000255" key="1">
    <source>
        <dbReference type="HAMAP-Rule" id="MF_00009"/>
    </source>
</evidence>
<dbReference type="EC" id="3.1.-.-" evidence="1"/>
<dbReference type="EMBL" id="AE000520">
    <property type="protein sequence ID" value="AAC65623.1"/>
    <property type="molecule type" value="Genomic_DNA"/>
</dbReference>
<dbReference type="PIR" id="A71300">
    <property type="entry name" value="A71300"/>
</dbReference>
<dbReference type="RefSeq" id="WP_010882095.1">
    <property type="nucleotide sequence ID" value="NC_021490.2"/>
</dbReference>
<dbReference type="SMR" id="O83656"/>
<dbReference type="IntAct" id="O83656">
    <property type="interactions" value="6"/>
</dbReference>
<dbReference type="STRING" id="243276.TP_0650"/>
<dbReference type="EnsemblBacteria" id="AAC65623">
    <property type="protein sequence ID" value="AAC65623"/>
    <property type="gene ID" value="TP_0650"/>
</dbReference>
<dbReference type="GeneID" id="93876418"/>
<dbReference type="KEGG" id="tpa:TP_0650"/>
<dbReference type="KEGG" id="tpw:TPANIC_0650"/>
<dbReference type="eggNOG" id="COG0319">
    <property type="taxonomic scope" value="Bacteria"/>
</dbReference>
<dbReference type="HOGENOM" id="CLU_106710_3_3_12"/>
<dbReference type="OrthoDB" id="9807740at2"/>
<dbReference type="Proteomes" id="UP000000811">
    <property type="component" value="Chromosome"/>
</dbReference>
<dbReference type="GO" id="GO:0005737">
    <property type="term" value="C:cytoplasm"/>
    <property type="evidence" value="ECO:0007669"/>
    <property type="project" value="UniProtKB-SubCell"/>
</dbReference>
<dbReference type="GO" id="GO:0004222">
    <property type="term" value="F:metalloendopeptidase activity"/>
    <property type="evidence" value="ECO:0007669"/>
    <property type="project" value="InterPro"/>
</dbReference>
<dbReference type="GO" id="GO:0004521">
    <property type="term" value="F:RNA endonuclease activity"/>
    <property type="evidence" value="ECO:0007669"/>
    <property type="project" value="UniProtKB-UniRule"/>
</dbReference>
<dbReference type="GO" id="GO:0008270">
    <property type="term" value="F:zinc ion binding"/>
    <property type="evidence" value="ECO:0007669"/>
    <property type="project" value="UniProtKB-UniRule"/>
</dbReference>
<dbReference type="GO" id="GO:0006364">
    <property type="term" value="P:rRNA processing"/>
    <property type="evidence" value="ECO:0007669"/>
    <property type="project" value="UniProtKB-UniRule"/>
</dbReference>
<dbReference type="Gene3D" id="3.40.390.30">
    <property type="entry name" value="Metalloproteases ('zincins'), catalytic domain"/>
    <property type="match status" value="1"/>
</dbReference>
<dbReference type="HAMAP" id="MF_00009">
    <property type="entry name" value="Endoribonucl_YbeY"/>
    <property type="match status" value="1"/>
</dbReference>
<dbReference type="InterPro" id="IPR023091">
    <property type="entry name" value="MetalPrtase_cat_dom_sf_prd"/>
</dbReference>
<dbReference type="InterPro" id="IPR002036">
    <property type="entry name" value="YbeY"/>
</dbReference>
<dbReference type="InterPro" id="IPR020549">
    <property type="entry name" value="YbeY_CS"/>
</dbReference>
<dbReference type="NCBIfam" id="TIGR00043">
    <property type="entry name" value="rRNA maturation RNase YbeY"/>
    <property type="match status" value="1"/>
</dbReference>
<dbReference type="PANTHER" id="PTHR46986">
    <property type="entry name" value="ENDORIBONUCLEASE YBEY, CHLOROPLASTIC"/>
    <property type="match status" value="1"/>
</dbReference>
<dbReference type="PANTHER" id="PTHR46986:SF1">
    <property type="entry name" value="ENDORIBONUCLEASE YBEY, CHLOROPLASTIC"/>
    <property type="match status" value="1"/>
</dbReference>
<dbReference type="Pfam" id="PF02130">
    <property type="entry name" value="YbeY"/>
    <property type="match status" value="1"/>
</dbReference>
<dbReference type="SUPFAM" id="SSF55486">
    <property type="entry name" value="Metalloproteases ('zincins'), catalytic domain"/>
    <property type="match status" value="1"/>
</dbReference>
<dbReference type="PROSITE" id="PS01306">
    <property type="entry name" value="UPF0054"/>
    <property type="match status" value="1"/>
</dbReference>
<proteinExistence type="inferred from homology"/>
<protein>
    <recommendedName>
        <fullName evidence="1">Endoribonuclease YbeY</fullName>
        <ecNumber evidence="1">3.1.-.-</ecNumber>
    </recommendedName>
</protein>
<keyword id="KW-0963">Cytoplasm</keyword>
<keyword id="KW-0255">Endonuclease</keyword>
<keyword id="KW-0378">Hydrolase</keyword>
<keyword id="KW-0479">Metal-binding</keyword>
<keyword id="KW-0540">Nuclease</keyword>
<keyword id="KW-1185">Reference proteome</keyword>
<keyword id="KW-0690">Ribosome biogenesis</keyword>
<keyword id="KW-0698">rRNA processing</keyword>
<keyword id="KW-0862">Zinc</keyword>
<name>YBEY_TREPA</name>
<feature type="chain" id="PRO_0000102558" description="Endoribonuclease YbeY">
    <location>
        <begin position="1"/>
        <end position="160"/>
    </location>
</feature>
<feature type="binding site" evidence="1">
    <location>
        <position position="118"/>
    </location>
    <ligand>
        <name>Zn(2+)</name>
        <dbReference type="ChEBI" id="CHEBI:29105"/>
        <note>catalytic</note>
    </ligand>
</feature>
<feature type="binding site" evidence="1">
    <location>
        <position position="122"/>
    </location>
    <ligand>
        <name>Zn(2+)</name>
        <dbReference type="ChEBI" id="CHEBI:29105"/>
        <note>catalytic</note>
    </ligand>
</feature>
<feature type="binding site" evidence="1">
    <location>
        <position position="128"/>
    </location>
    <ligand>
        <name>Zn(2+)</name>
        <dbReference type="ChEBI" id="CHEBI:29105"/>
        <note>catalytic</note>
    </ligand>
</feature>
<accession>O83656</accession>
<comment type="function">
    <text evidence="1">Single strand-specific metallo-endoribonuclease involved in late-stage 70S ribosome quality control and in maturation of the 3' terminus of the 16S rRNA.</text>
</comment>
<comment type="cofactor">
    <cofactor evidence="1">
        <name>Zn(2+)</name>
        <dbReference type="ChEBI" id="CHEBI:29105"/>
    </cofactor>
    <text evidence="1">Binds 1 zinc ion.</text>
</comment>
<comment type="subcellular location">
    <subcellularLocation>
        <location evidence="1">Cytoplasm</location>
    </subcellularLocation>
</comment>
<comment type="similarity">
    <text evidence="1">Belongs to the endoribonuclease YbeY family.</text>
</comment>